<evidence type="ECO:0000255" key="1">
    <source>
        <dbReference type="HAMAP-Rule" id="MF_00530"/>
    </source>
</evidence>
<protein>
    <recommendedName>
        <fullName evidence="1">ATP synthase epsilon chain</fullName>
    </recommendedName>
    <alternativeName>
        <fullName evidence="1">ATP synthase F1 sector epsilon subunit</fullName>
    </alternativeName>
    <alternativeName>
        <fullName evidence="1">F-ATPase epsilon subunit</fullName>
    </alternativeName>
</protein>
<name>ATPE_DESAH</name>
<comment type="function">
    <text evidence="1">Produces ATP from ADP in the presence of a proton gradient across the membrane.</text>
</comment>
<comment type="subunit">
    <text evidence="1">F-type ATPases have 2 components, CF(1) - the catalytic core - and CF(0) - the membrane proton channel. CF(1) has five subunits: alpha(3), beta(3), gamma(1), delta(1), epsilon(1). CF(0) has three main subunits: a, b and c.</text>
</comment>
<comment type="subcellular location">
    <subcellularLocation>
        <location evidence="1">Cell inner membrane</location>
        <topology evidence="1">Peripheral membrane protein</topology>
    </subcellularLocation>
</comment>
<comment type="similarity">
    <text evidence="1">Belongs to the ATPase epsilon chain family.</text>
</comment>
<keyword id="KW-0066">ATP synthesis</keyword>
<keyword id="KW-0997">Cell inner membrane</keyword>
<keyword id="KW-1003">Cell membrane</keyword>
<keyword id="KW-0139">CF(1)</keyword>
<keyword id="KW-0375">Hydrogen ion transport</keyword>
<keyword id="KW-0406">Ion transport</keyword>
<keyword id="KW-0472">Membrane</keyword>
<keyword id="KW-1185">Reference proteome</keyword>
<keyword id="KW-0813">Transport</keyword>
<organism>
    <name type="scientific">Desulforapulum autotrophicum (strain ATCC 43914 / DSM 3382 / VKM B-1955 / HRM2)</name>
    <name type="common">Desulfobacterium autotrophicum</name>
    <dbReference type="NCBI Taxonomy" id="177437"/>
    <lineage>
        <taxon>Bacteria</taxon>
        <taxon>Pseudomonadati</taxon>
        <taxon>Thermodesulfobacteriota</taxon>
        <taxon>Desulfobacteria</taxon>
        <taxon>Desulfobacterales</taxon>
        <taxon>Desulfobacteraceae</taxon>
        <taxon>Desulforapulum</taxon>
    </lineage>
</organism>
<reference key="1">
    <citation type="journal article" date="2009" name="Environ. Microbiol.">
        <title>Genome sequence of Desulfobacterium autotrophicum HRM2, a marine sulfate reducer oxidizing organic carbon completely to carbon dioxide.</title>
        <authorList>
            <person name="Strittmatter A.W."/>
            <person name="Liesegang H."/>
            <person name="Rabus R."/>
            <person name="Decker I."/>
            <person name="Amann J."/>
            <person name="Andres S."/>
            <person name="Henne A."/>
            <person name="Fricke W.F."/>
            <person name="Martinez-Arias R."/>
            <person name="Bartels D."/>
            <person name="Goesmann A."/>
            <person name="Krause L."/>
            <person name="Puehler A."/>
            <person name="Klenk H.P."/>
            <person name="Richter M."/>
            <person name="Schuler M."/>
            <person name="Gloeckner F.O."/>
            <person name="Meyerdierks A."/>
            <person name="Gottschalk G."/>
            <person name="Amann R."/>
        </authorList>
    </citation>
    <scope>NUCLEOTIDE SEQUENCE [LARGE SCALE GENOMIC DNA]</scope>
    <source>
        <strain>ATCC 43914 / DSM 3382 / VKM B-1955 / HRM2</strain>
    </source>
</reference>
<accession>C0Q977</accession>
<dbReference type="EMBL" id="CP001087">
    <property type="protein sequence ID" value="ACN16582.1"/>
    <property type="molecule type" value="Genomic_DNA"/>
</dbReference>
<dbReference type="RefSeq" id="WP_015905332.1">
    <property type="nucleotide sequence ID" value="NC_012108.1"/>
</dbReference>
<dbReference type="SMR" id="C0Q977"/>
<dbReference type="STRING" id="177437.HRM2_35160"/>
<dbReference type="KEGG" id="dat:HRM2_35160"/>
<dbReference type="eggNOG" id="COG0355">
    <property type="taxonomic scope" value="Bacteria"/>
</dbReference>
<dbReference type="HOGENOM" id="CLU_084338_1_3_7"/>
<dbReference type="OrthoDB" id="9799969at2"/>
<dbReference type="Proteomes" id="UP000000442">
    <property type="component" value="Chromosome"/>
</dbReference>
<dbReference type="GO" id="GO:0005886">
    <property type="term" value="C:plasma membrane"/>
    <property type="evidence" value="ECO:0007669"/>
    <property type="project" value="UniProtKB-SubCell"/>
</dbReference>
<dbReference type="GO" id="GO:0045259">
    <property type="term" value="C:proton-transporting ATP synthase complex"/>
    <property type="evidence" value="ECO:0007669"/>
    <property type="project" value="UniProtKB-KW"/>
</dbReference>
<dbReference type="GO" id="GO:0005524">
    <property type="term" value="F:ATP binding"/>
    <property type="evidence" value="ECO:0007669"/>
    <property type="project" value="UniProtKB-UniRule"/>
</dbReference>
<dbReference type="GO" id="GO:0046933">
    <property type="term" value="F:proton-transporting ATP synthase activity, rotational mechanism"/>
    <property type="evidence" value="ECO:0007669"/>
    <property type="project" value="UniProtKB-UniRule"/>
</dbReference>
<dbReference type="CDD" id="cd12152">
    <property type="entry name" value="F1-ATPase_delta"/>
    <property type="match status" value="1"/>
</dbReference>
<dbReference type="Gene3D" id="1.20.5.440">
    <property type="entry name" value="ATP synthase delta/epsilon subunit, C-terminal domain"/>
    <property type="match status" value="1"/>
</dbReference>
<dbReference type="Gene3D" id="2.60.15.10">
    <property type="entry name" value="F0F1 ATP synthase delta/epsilon subunit, N-terminal"/>
    <property type="match status" value="1"/>
</dbReference>
<dbReference type="HAMAP" id="MF_00530">
    <property type="entry name" value="ATP_synth_epsil_bac"/>
    <property type="match status" value="1"/>
</dbReference>
<dbReference type="InterPro" id="IPR036794">
    <property type="entry name" value="ATP_F1_dsu/esu_C_sf"/>
</dbReference>
<dbReference type="InterPro" id="IPR001469">
    <property type="entry name" value="ATP_synth_F1_dsu/esu"/>
</dbReference>
<dbReference type="InterPro" id="IPR020546">
    <property type="entry name" value="ATP_synth_F1_dsu/esu_N"/>
</dbReference>
<dbReference type="InterPro" id="IPR020547">
    <property type="entry name" value="ATP_synth_F1_esu_C"/>
</dbReference>
<dbReference type="InterPro" id="IPR036771">
    <property type="entry name" value="ATPsynth_dsu/esu_N"/>
</dbReference>
<dbReference type="NCBIfam" id="TIGR01216">
    <property type="entry name" value="ATP_synt_epsi"/>
    <property type="match status" value="1"/>
</dbReference>
<dbReference type="NCBIfam" id="NF009980">
    <property type="entry name" value="PRK13446.1"/>
    <property type="match status" value="1"/>
</dbReference>
<dbReference type="PANTHER" id="PTHR13822">
    <property type="entry name" value="ATP SYNTHASE DELTA/EPSILON CHAIN"/>
    <property type="match status" value="1"/>
</dbReference>
<dbReference type="PANTHER" id="PTHR13822:SF10">
    <property type="entry name" value="ATP SYNTHASE EPSILON CHAIN, CHLOROPLASTIC"/>
    <property type="match status" value="1"/>
</dbReference>
<dbReference type="Pfam" id="PF00401">
    <property type="entry name" value="ATP-synt_DE"/>
    <property type="match status" value="1"/>
</dbReference>
<dbReference type="Pfam" id="PF02823">
    <property type="entry name" value="ATP-synt_DE_N"/>
    <property type="match status" value="1"/>
</dbReference>
<dbReference type="SUPFAM" id="SSF46604">
    <property type="entry name" value="Epsilon subunit of F1F0-ATP synthase C-terminal domain"/>
    <property type="match status" value="1"/>
</dbReference>
<dbReference type="SUPFAM" id="SSF51344">
    <property type="entry name" value="Epsilon subunit of F1F0-ATP synthase N-terminal domain"/>
    <property type="match status" value="1"/>
</dbReference>
<proteinExistence type="inferred from homology"/>
<gene>
    <name evidence="1" type="primary">atpC</name>
    <name type="ordered locus">HRM2_35160</name>
</gene>
<feature type="chain" id="PRO_1000211782" description="ATP synthase epsilon chain">
    <location>
        <begin position="1"/>
        <end position="135"/>
    </location>
</feature>
<sequence length="135" mass="14736">MAENIFLEVVTPGASVVSEEAQIVMAPGSEGEFGVLRGHTTFLTSLKIGSLRYKDAAGKERVLFVNGGFAEVLPTKVTVLAESAERRSQIEVERVRAAKARAEKRISERSVGIDILRAEAALRRAIQRLSVIETR</sequence>